<reference key="1">
    <citation type="journal article" date="1994" name="EMBO J.">
        <title>Complete DNA sequence of yeast chromosome II.</title>
        <authorList>
            <person name="Feldmann H."/>
            <person name="Aigle M."/>
            <person name="Aljinovic G."/>
            <person name="Andre B."/>
            <person name="Baclet M.C."/>
            <person name="Barthe C."/>
            <person name="Baur A."/>
            <person name="Becam A.-M."/>
            <person name="Biteau N."/>
            <person name="Boles E."/>
            <person name="Brandt T."/>
            <person name="Brendel M."/>
            <person name="Brueckner M."/>
            <person name="Bussereau F."/>
            <person name="Christiansen C."/>
            <person name="Contreras R."/>
            <person name="Crouzet M."/>
            <person name="Cziepluch C."/>
            <person name="Demolis N."/>
            <person name="Delaveau T."/>
            <person name="Doignon F."/>
            <person name="Domdey H."/>
            <person name="Duesterhus S."/>
            <person name="Dubois E."/>
            <person name="Dujon B."/>
            <person name="El Bakkoury M."/>
            <person name="Entian K.-D."/>
            <person name="Feuermann M."/>
            <person name="Fiers W."/>
            <person name="Fobo G.M."/>
            <person name="Fritz C."/>
            <person name="Gassenhuber J."/>
            <person name="Glansdorff N."/>
            <person name="Goffeau A."/>
            <person name="Grivell L.A."/>
            <person name="de Haan M."/>
            <person name="Hein C."/>
            <person name="Herbert C.J."/>
            <person name="Hollenberg C.P."/>
            <person name="Holmstroem K."/>
            <person name="Jacq C."/>
            <person name="Jacquet M."/>
            <person name="Jauniaux J.-C."/>
            <person name="Jonniaux J.-L."/>
            <person name="Kallesoee T."/>
            <person name="Kiesau P."/>
            <person name="Kirchrath L."/>
            <person name="Koetter P."/>
            <person name="Korol S."/>
            <person name="Liebl S."/>
            <person name="Logghe M."/>
            <person name="Lohan A.J.E."/>
            <person name="Louis E.J."/>
            <person name="Li Z.Y."/>
            <person name="Maat M.J."/>
            <person name="Mallet L."/>
            <person name="Mannhaupt G."/>
            <person name="Messenguy F."/>
            <person name="Miosga T."/>
            <person name="Molemans F."/>
            <person name="Mueller S."/>
            <person name="Nasr F."/>
            <person name="Obermaier B."/>
            <person name="Perea J."/>
            <person name="Pierard A."/>
            <person name="Piravandi E."/>
            <person name="Pohl F.M."/>
            <person name="Pohl T.M."/>
            <person name="Potier S."/>
            <person name="Proft M."/>
            <person name="Purnelle B."/>
            <person name="Ramezani Rad M."/>
            <person name="Rieger M."/>
            <person name="Rose M."/>
            <person name="Schaaff-Gerstenschlaeger I."/>
            <person name="Scherens B."/>
            <person name="Schwarzlose C."/>
            <person name="Skala J."/>
            <person name="Slonimski P.P."/>
            <person name="Smits P.H.M."/>
            <person name="Souciet J.-L."/>
            <person name="Steensma H.Y."/>
            <person name="Stucka R."/>
            <person name="Urrestarazu L.A."/>
            <person name="van der Aart Q.J.M."/>
            <person name="Van Dyck L."/>
            <person name="Vassarotti A."/>
            <person name="Vetter I."/>
            <person name="Vierendeels F."/>
            <person name="Vissers S."/>
            <person name="Wagner G."/>
            <person name="de Wergifosse P."/>
            <person name="Wolfe K.H."/>
            <person name="Zagulski M."/>
            <person name="Zimmermann F.K."/>
            <person name="Mewes H.-W."/>
            <person name="Kleine K."/>
        </authorList>
    </citation>
    <scope>NUCLEOTIDE SEQUENCE [LARGE SCALE GENOMIC DNA]</scope>
    <source>
        <strain>ATCC 204508 / S288c</strain>
    </source>
</reference>
<reference key="2">
    <citation type="journal article" date="2014" name="G3 (Bethesda)">
        <title>The reference genome sequence of Saccharomyces cerevisiae: Then and now.</title>
        <authorList>
            <person name="Engel S.R."/>
            <person name="Dietrich F.S."/>
            <person name="Fisk D.G."/>
            <person name="Binkley G."/>
            <person name="Balakrishnan R."/>
            <person name="Costanzo M.C."/>
            <person name="Dwight S.S."/>
            <person name="Hitz B.C."/>
            <person name="Karra K."/>
            <person name="Nash R.S."/>
            <person name="Weng S."/>
            <person name="Wong E.D."/>
            <person name="Lloyd P."/>
            <person name="Skrzypek M.S."/>
            <person name="Miyasato S.R."/>
            <person name="Simison M."/>
            <person name="Cherry J.M."/>
        </authorList>
    </citation>
    <scope>GENOME REANNOTATION</scope>
    <source>
        <strain>ATCC 204508 / S288c</strain>
    </source>
</reference>
<reference key="3">
    <citation type="journal article" date="2007" name="Genome Res.">
        <title>Approaching a complete repository of sequence-verified protein-encoding clones for Saccharomyces cerevisiae.</title>
        <authorList>
            <person name="Hu Y."/>
            <person name="Rolfs A."/>
            <person name="Bhullar B."/>
            <person name="Murthy T.V.S."/>
            <person name="Zhu C."/>
            <person name="Berger M.F."/>
            <person name="Camargo A.A."/>
            <person name="Kelley F."/>
            <person name="McCarron S."/>
            <person name="Jepson D."/>
            <person name="Richardson A."/>
            <person name="Raphael J."/>
            <person name="Moreira D."/>
            <person name="Taycher E."/>
            <person name="Zuo D."/>
            <person name="Mohr S."/>
            <person name="Kane M.F."/>
            <person name="Williamson J."/>
            <person name="Simpson A.J.G."/>
            <person name="Bulyk M.L."/>
            <person name="Harlow E."/>
            <person name="Marsischky G."/>
            <person name="Kolodner R.D."/>
            <person name="LaBaer J."/>
        </authorList>
    </citation>
    <scope>NUCLEOTIDE SEQUENCE [GENOMIC DNA]</scope>
    <source>
        <strain>ATCC 204508 / S288c</strain>
    </source>
</reference>
<organism>
    <name type="scientific">Saccharomyces cerevisiae (strain ATCC 204508 / S288c)</name>
    <name type="common">Baker's yeast</name>
    <dbReference type="NCBI Taxonomy" id="559292"/>
    <lineage>
        <taxon>Eukaryota</taxon>
        <taxon>Fungi</taxon>
        <taxon>Dikarya</taxon>
        <taxon>Ascomycota</taxon>
        <taxon>Saccharomycotina</taxon>
        <taxon>Saccharomycetes</taxon>
        <taxon>Saccharomycetales</taxon>
        <taxon>Saccharomycetaceae</taxon>
        <taxon>Saccharomyces</taxon>
    </lineage>
</organism>
<proteinExistence type="uncertain"/>
<dbReference type="EMBL" id="Z35868">
    <property type="status" value="NOT_ANNOTATED_CDS"/>
    <property type="molecule type" value="Genomic_DNA"/>
</dbReference>
<dbReference type="EMBL" id="AY693267">
    <property type="protein sequence ID" value="AAT93286.1"/>
    <property type="molecule type" value="Genomic_DNA"/>
</dbReference>
<dbReference type="STRING" id="4932.YBL107W-A"/>
<dbReference type="PaxDb" id="4932-YBL107W-A"/>
<dbReference type="EnsemblFungi" id="YBL107W-A_mRNA">
    <property type="protein sequence ID" value="YBL107W-A"/>
    <property type="gene ID" value="YBL107W-A"/>
</dbReference>
<dbReference type="AGR" id="SGD:S000007229"/>
<dbReference type="SGD" id="S000007229">
    <property type="gene designation" value="YBL107W-A"/>
</dbReference>
<dbReference type="HOGENOM" id="CLU_3377404_0_0_1"/>
<evidence type="ECO:0000305" key="1">
    <source>
    </source>
</evidence>
<sequence length="34" mass="4053">MIIIFIELCRIADSLLWIPKSWRRTSSISTYLIL</sequence>
<protein>
    <recommendedName>
        <fullName>Putative uncharacterized protein YBL107W-A</fullName>
    </recommendedName>
</protein>
<name>YB107_YEAST</name>
<feature type="chain" id="PRO_0000299791" description="Putative uncharacterized protein YBL107W-A">
    <location>
        <begin position="1"/>
        <end position="34"/>
    </location>
</feature>
<comment type="caution">
    <text evidence="1">Product of a dubious gene prediction unlikely to encode a functional protein. Because of that it is not part of the S.cerevisiae S288c complete/reference proteome set.</text>
</comment>
<accession>Q6B113</accession>
<gene>
    <name type="ordered locus">YBL107W-A</name>
</gene>